<dbReference type="EC" id="3.4.11.18" evidence="1"/>
<dbReference type="EMBL" id="CR382135">
    <property type="protein sequence ID" value="CAG85896.2"/>
    <property type="molecule type" value="Genomic_DNA"/>
</dbReference>
<dbReference type="RefSeq" id="XP_457851.2">
    <property type="nucleotide sequence ID" value="XM_457851.1"/>
</dbReference>
<dbReference type="SMR" id="Q6BVB8"/>
<dbReference type="FunCoup" id="Q6BVB8">
    <property type="interactions" value="1211"/>
</dbReference>
<dbReference type="STRING" id="284592.Q6BVB8"/>
<dbReference type="MEROPS" id="M24.002"/>
<dbReference type="GeneID" id="2900504"/>
<dbReference type="KEGG" id="dha:DEHA2C03894g"/>
<dbReference type="VEuPathDB" id="FungiDB:DEHA2C03894g"/>
<dbReference type="eggNOG" id="KOG2775">
    <property type="taxonomic scope" value="Eukaryota"/>
</dbReference>
<dbReference type="HOGENOM" id="CLU_015857_7_1_1"/>
<dbReference type="InParanoid" id="Q6BVB8"/>
<dbReference type="OMA" id="PFAKRWL"/>
<dbReference type="OrthoDB" id="7848262at2759"/>
<dbReference type="Proteomes" id="UP000000599">
    <property type="component" value="Chromosome C"/>
</dbReference>
<dbReference type="GO" id="GO:0005737">
    <property type="term" value="C:cytoplasm"/>
    <property type="evidence" value="ECO:0007669"/>
    <property type="project" value="UniProtKB-SubCell"/>
</dbReference>
<dbReference type="GO" id="GO:0004239">
    <property type="term" value="F:initiator methionyl aminopeptidase activity"/>
    <property type="evidence" value="ECO:0007669"/>
    <property type="project" value="UniProtKB-UniRule"/>
</dbReference>
<dbReference type="GO" id="GO:0046872">
    <property type="term" value="F:metal ion binding"/>
    <property type="evidence" value="ECO:0007669"/>
    <property type="project" value="UniProtKB-UniRule"/>
</dbReference>
<dbReference type="GO" id="GO:0070006">
    <property type="term" value="F:metalloaminopeptidase activity"/>
    <property type="evidence" value="ECO:0007669"/>
    <property type="project" value="UniProtKB-UniRule"/>
</dbReference>
<dbReference type="GO" id="GO:0051604">
    <property type="term" value="P:protein maturation"/>
    <property type="evidence" value="ECO:0007669"/>
    <property type="project" value="EnsemblFungi"/>
</dbReference>
<dbReference type="GO" id="GO:0006508">
    <property type="term" value="P:proteolysis"/>
    <property type="evidence" value="ECO:0007669"/>
    <property type="project" value="UniProtKB-KW"/>
</dbReference>
<dbReference type="CDD" id="cd01088">
    <property type="entry name" value="MetAP2"/>
    <property type="match status" value="1"/>
</dbReference>
<dbReference type="Gene3D" id="3.90.230.10">
    <property type="entry name" value="Creatinase/methionine aminopeptidase superfamily"/>
    <property type="match status" value="1"/>
</dbReference>
<dbReference type="Gene3D" id="1.10.10.10">
    <property type="entry name" value="Winged helix-like DNA-binding domain superfamily/Winged helix DNA-binding domain"/>
    <property type="match status" value="1"/>
</dbReference>
<dbReference type="HAMAP" id="MF_03175">
    <property type="entry name" value="MetAP_2_euk"/>
    <property type="match status" value="1"/>
</dbReference>
<dbReference type="InterPro" id="IPR036005">
    <property type="entry name" value="Creatinase/aminopeptidase-like"/>
</dbReference>
<dbReference type="InterPro" id="IPR050247">
    <property type="entry name" value="Met_Aminopeptidase_Type2"/>
</dbReference>
<dbReference type="InterPro" id="IPR000994">
    <property type="entry name" value="Pept_M24"/>
</dbReference>
<dbReference type="InterPro" id="IPR001714">
    <property type="entry name" value="Pept_M24_MAP"/>
</dbReference>
<dbReference type="InterPro" id="IPR002468">
    <property type="entry name" value="Pept_M24A_MAP2"/>
</dbReference>
<dbReference type="InterPro" id="IPR018349">
    <property type="entry name" value="Pept_M24A_MAP2_BS"/>
</dbReference>
<dbReference type="InterPro" id="IPR036388">
    <property type="entry name" value="WH-like_DNA-bd_sf"/>
</dbReference>
<dbReference type="InterPro" id="IPR036390">
    <property type="entry name" value="WH_DNA-bd_sf"/>
</dbReference>
<dbReference type="NCBIfam" id="TIGR00501">
    <property type="entry name" value="met_pdase_II"/>
    <property type="match status" value="1"/>
</dbReference>
<dbReference type="PANTHER" id="PTHR45777">
    <property type="entry name" value="METHIONINE AMINOPEPTIDASE 2"/>
    <property type="match status" value="1"/>
</dbReference>
<dbReference type="PANTHER" id="PTHR45777:SF2">
    <property type="entry name" value="METHIONINE AMINOPEPTIDASE 2"/>
    <property type="match status" value="1"/>
</dbReference>
<dbReference type="Pfam" id="PF00557">
    <property type="entry name" value="Peptidase_M24"/>
    <property type="match status" value="1"/>
</dbReference>
<dbReference type="PRINTS" id="PR00599">
    <property type="entry name" value="MAPEPTIDASE"/>
</dbReference>
<dbReference type="SUPFAM" id="SSF55920">
    <property type="entry name" value="Creatinase/aminopeptidase"/>
    <property type="match status" value="1"/>
</dbReference>
<dbReference type="SUPFAM" id="SSF46785">
    <property type="entry name" value="Winged helix' DNA-binding domain"/>
    <property type="match status" value="1"/>
</dbReference>
<dbReference type="PROSITE" id="PS01202">
    <property type="entry name" value="MAP_2"/>
    <property type="match status" value="1"/>
</dbReference>
<evidence type="ECO:0000255" key="1">
    <source>
        <dbReference type="HAMAP-Rule" id="MF_03175"/>
    </source>
</evidence>
<evidence type="ECO:0000256" key="2">
    <source>
        <dbReference type="SAM" id="MobiDB-lite"/>
    </source>
</evidence>
<comment type="function">
    <text evidence="1">Cotranslationally removes the N-terminal methionine from nascent proteins. The N-terminal methionine is often cleaved when the second residue in the primary sequence is small and uncharged (Met-Ala-, Cys, Gly, Pro, Ser, Thr, or Val).</text>
</comment>
<comment type="catalytic activity">
    <reaction evidence="1">
        <text>Release of N-terminal amino acids, preferentially methionine, from peptides and arylamides.</text>
        <dbReference type="EC" id="3.4.11.18"/>
    </reaction>
</comment>
<comment type="cofactor">
    <cofactor evidence="1">
        <name>Co(2+)</name>
        <dbReference type="ChEBI" id="CHEBI:48828"/>
    </cofactor>
    <cofactor evidence="1">
        <name>Zn(2+)</name>
        <dbReference type="ChEBI" id="CHEBI:29105"/>
    </cofactor>
    <cofactor evidence="1">
        <name>Mn(2+)</name>
        <dbReference type="ChEBI" id="CHEBI:29035"/>
    </cofactor>
    <cofactor evidence="1">
        <name>Fe(2+)</name>
        <dbReference type="ChEBI" id="CHEBI:29033"/>
    </cofactor>
    <text evidence="1">Binds 2 divalent metal cations per subunit. Has a high-affinity and a low affinity metal-binding site. The true nature of the physiological cofactor is under debate. The enzyme is active with cobalt, zinc, manganese or divalent iron ions. Most likely, methionine aminopeptidases function as mononuclear Fe(2+)-metalloproteases under physiological conditions, and the catalytically relevant metal-binding site has been assigned to the histidine-containing high-affinity site.</text>
</comment>
<comment type="subcellular location">
    <subcellularLocation>
        <location evidence="1">Cytoplasm</location>
    </subcellularLocation>
</comment>
<comment type="similarity">
    <text evidence="1">Belongs to the peptidase M24A family. Methionine aminopeptidase eukaryotic type 2 subfamily.</text>
</comment>
<organism>
    <name type="scientific">Debaryomyces hansenii (strain ATCC 36239 / CBS 767 / BCRC 21394 / JCM 1990 / NBRC 0083 / IGC 2968)</name>
    <name type="common">Yeast</name>
    <name type="synonym">Torulaspora hansenii</name>
    <dbReference type="NCBI Taxonomy" id="284592"/>
    <lineage>
        <taxon>Eukaryota</taxon>
        <taxon>Fungi</taxon>
        <taxon>Dikarya</taxon>
        <taxon>Ascomycota</taxon>
        <taxon>Saccharomycotina</taxon>
        <taxon>Pichiomycetes</taxon>
        <taxon>Debaryomycetaceae</taxon>
        <taxon>Debaryomyces</taxon>
    </lineage>
</organism>
<gene>
    <name evidence="1" type="primary">MAP2</name>
    <name type="ordered locus">DEHA2C03894g</name>
</gene>
<protein>
    <recommendedName>
        <fullName evidence="1">Methionine aminopeptidase 2</fullName>
        <shortName evidence="1">MAP 2</shortName>
        <shortName evidence="1">MetAP 2</shortName>
        <ecNumber evidence="1">3.4.11.18</ecNumber>
    </recommendedName>
    <alternativeName>
        <fullName evidence="1">Peptidase M</fullName>
    </alternativeName>
</protein>
<feature type="chain" id="PRO_0000407651" description="Methionine aminopeptidase 2">
    <location>
        <begin position="1"/>
        <end position="419"/>
    </location>
</feature>
<feature type="region of interest" description="Disordered" evidence="2">
    <location>
        <begin position="1"/>
        <end position="69"/>
    </location>
</feature>
<feature type="compositionally biased region" description="Basic and acidic residues" evidence="2">
    <location>
        <begin position="11"/>
        <end position="29"/>
    </location>
</feature>
<feature type="compositionally biased region" description="Acidic residues" evidence="2">
    <location>
        <begin position="30"/>
        <end position="41"/>
    </location>
</feature>
<feature type="compositionally biased region" description="Basic residues" evidence="2">
    <location>
        <begin position="48"/>
        <end position="61"/>
    </location>
</feature>
<feature type="binding site" evidence="1">
    <location>
        <position position="172"/>
    </location>
    <ligand>
        <name>substrate</name>
    </ligand>
</feature>
<feature type="binding site" evidence="1">
    <location>
        <position position="192"/>
    </location>
    <ligand>
        <name>a divalent metal cation</name>
        <dbReference type="ChEBI" id="CHEBI:60240"/>
        <label>1</label>
    </ligand>
</feature>
<feature type="binding site" evidence="1">
    <location>
        <position position="203"/>
    </location>
    <ligand>
        <name>a divalent metal cation</name>
        <dbReference type="ChEBI" id="CHEBI:60240"/>
        <label>1</label>
    </ligand>
</feature>
<feature type="binding site" evidence="1">
    <location>
        <position position="203"/>
    </location>
    <ligand>
        <name>a divalent metal cation</name>
        <dbReference type="ChEBI" id="CHEBI:60240"/>
        <label>2</label>
        <note>catalytic</note>
    </ligand>
</feature>
<feature type="binding site" evidence="1">
    <location>
        <position position="272"/>
    </location>
    <ligand>
        <name>a divalent metal cation</name>
        <dbReference type="ChEBI" id="CHEBI:60240"/>
        <label>2</label>
        <note>catalytic</note>
    </ligand>
</feature>
<feature type="binding site" evidence="1">
    <location>
        <position position="280"/>
    </location>
    <ligand>
        <name>substrate</name>
    </ligand>
</feature>
<feature type="binding site" evidence="1">
    <location>
        <position position="305"/>
    </location>
    <ligand>
        <name>a divalent metal cation</name>
        <dbReference type="ChEBI" id="CHEBI:60240"/>
        <label>2</label>
        <note>catalytic</note>
    </ligand>
</feature>
<feature type="binding site" evidence="1">
    <location>
        <position position="400"/>
    </location>
    <ligand>
        <name>a divalent metal cation</name>
        <dbReference type="ChEBI" id="CHEBI:60240"/>
        <label>1</label>
    </ligand>
</feature>
<feature type="binding site" evidence="1">
    <location>
        <position position="400"/>
    </location>
    <ligand>
        <name>a divalent metal cation</name>
        <dbReference type="ChEBI" id="CHEBI:60240"/>
        <label>2</label>
        <note>catalytic</note>
    </ligand>
</feature>
<sequence>MSTNSSNPNEVMEKVQDLKIDDSKPKVDSEEQPEAESDGESATDGAQKKKKKKKSKKKKKITAIDNSYPDGVFPEGEWQEYPLDVNSYRTTSEEKRYLDRQQNNHWQDFRKGAEIHRRVRHKAQSSIRPGMNMTEIADLIENSVRSYANNDHTLKAGIGFPTGLSLNHVAAHYTPNAGDKTVLNYEDVMKVDIGVHVNGHIVDSAFTLTFDDKYDSLLKAVKEATNTGVKEAGIDVRLNDIGEAIQEVMESYEMELNGKTYPIKCIRNLNGHNIGDYLIHSGKTVPIVPNGDMTKMEEGETFAIETFGSTGNGYVLPQGECSHYAKNPGTDDIVVPGDKAKSLLNVINENFGTLPWCRRYLDRLGQDKYLLALNQLVRAGIVQDYPPIVDIKGSYTAQFEHTILLHPHKKEVVSRGDDY</sequence>
<proteinExistence type="inferred from homology"/>
<accession>Q6BVB8</accession>
<keyword id="KW-0031">Aminopeptidase</keyword>
<keyword id="KW-0963">Cytoplasm</keyword>
<keyword id="KW-0378">Hydrolase</keyword>
<keyword id="KW-0479">Metal-binding</keyword>
<keyword id="KW-0645">Protease</keyword>
<keyword id="KW-1185">Reference proteome</keyword>
<name>MAP2_DEBHA</name>
<reference key="1">
    <citation type="journal article" date="2004" name="Nature">
        <title>Genome evolution in yeasts.</title>
        <authorList>
            <person name="Dujon B."/>
            <person name="Sherman D."/>
            <person name="Fischer G."/>
            <person name="Durrens P."/>
            <person name="Casaregola S."/>
            <person name="Lafontaine I."/>
            <person name="de Montigny J."/>
            <person name="Marck C."/>
            <person name="Neuveglise C."/>
            <person name="Talla E."/>
            <person name="Goffard N."/>
            <person name="Frangeul L."/>
            <person name="Aigle M."/>
            <person name="Anthouard V."/>
            <person name="Babour A."/>
            <person name="Barbe V."/>
            <person name="Barnay S."/>
            <person name="Blanchin S."/>
            <person name="Beckerich J.-M."/>
            <person name="Beyne E."/>
            <person name="Bleykasten C."/>
            <person name="Boisrame A."/>
            <person name="Boyer J."/>
            <person name="Cattolico L."/>
            <person name="Confanioleri F."/>
            <person name="de Daruvar A."/>
            <person name="Despons L."/>
            <person name="Fabre E."/>
            <person name="Fairhead C."/>
            <person name="Ferry-Dumazet H."/>
            <person name="Groppi A."/>
            <person name="Hantraye F."/>
            <person name="Hennequin C."/>
            <person name="Jauniaux N."/>
            <person name="Joyet P."/>
            <person name="Kachouri R."/>
            <person name="Kerrest A."/>
            <person name="Koszul R."/>
            <person name="Lemaire M."/>
            <person name="Lesur I."/>
            <person name="Ma L."/>
            <person name="Muller H."/>
            <person name="Nicaud J.-M."/>
            <person name="Nikolski M."/>
            <person name="Oztas S."/>
            <person name="Ozier-Kalogeropoulos O."/>
            <person name="Pellenz S."/>
            <person name="Potier S."/>
            <person name="Richard G.-F."/>
            <person name="Straub M.-L."/>
            <person name="Suleau A."/>
            <person name="Swennen D."/>
            <person name="Tekaia F."/>
            <person name="Wesolowski-Louvel M."/>
            <person name="Westhof E."/>
            <person name="Wirth B."/>
            <person name="Zeniou-Meyer M."/>
            <person name="Zivanovic Y."/>
            <person name="Bolotin-Fukuhara M."/>
            <person name="Thierry A."/>
            <person name="Bouchier C."/>
            <person name="Caudron B."/>
            <person name="Scarpelli C."/>
            <person name="Gaillardin C."/>
            <person name="Weissenbach J."/>
            <person name="Wincker P."/>
            <person name="Souciet J.-L."/>
        </authorList>
    </citation>
    <scope>NUCLEOTIDE SEQUENCE [LARGE SCALE GENOMIC DNA]</scope>
    <source>
        <strain>ATCC 36239 / CBS 767 / BCRC 21394 / JCM 1990 / NBRC 0083 / IGC 2968</strain>
    </source>
</reference>